<reference key="1">
    <citation type="journal article" date="2005" name="BMC Genomics">
        <title>Characterization of 954 bovine full-CDS cDNA sequences.</title>
        <authorList>
            <person name="Harhay G.P."/>
            <person name="Sonstegard T.S."/>
            <person name="Keele J.W."/>
            <person name="Heaton M.P."/>
            <person name="Clawson M.L."/>
            <person name="Snelling W.M."/>
            <person name="Wiedmann R.T."/>
            <person name="Van Tassell C.P."/>
            <person name="Smith T.P.L."/>
        </authorList>
    </citation>
    <scope>NUCLEOTIDE SEQUENCE [LARGE SCALE MRNA] (ISOFORM 1)</scope>
</reference>
<reference key="2">
    <citation type="submission" date="2005-12" db="EMBL/GenBank/DDBJ databases">
        <authorList>
            <consortium name="NIH - Mammalian Gene Collection (MGC) project"/>
        </authorList>
    </citation>
    <scope>NUCLEOTIDE SEQUENCE [LARGE SCALE MRNA] (ISOFORM 2)</scope>
    <source>
        <strain>Crossbred X Angus</strain>
        <tissue>Liver</tissue>
    </source>
</reference>
<proteinExistence type="evidence at transcript level"/>
<organism>
    <name type="scientific">Bos taurus</name>
    <name type="common">Bovine</name>
    <dbReference type="NCBI Taxonomy" id="9913"/>
    <lineage>
        <taxon>Eukaryota</taxon>
        <taxon>Metazoa</taxon>
        <taxon>Chordata</taxon>
        <taxon>Craniata</taxon>
        <taxon>Vertebrata</taxon>
        <taxon>Euteleostomi</taxon>
        <taxon>Mammalia</taxon>
        <taxon>Eutheria</taxon>
        <taxon>Laurasiatheria</taxon>
        <taxon>Artiodactyla</taxon>
        <taxon>Ruminantia</taxon>
        <taxon>Pecora</taxon>
        <taxon>Bovidae</taxon>
        <taxon>Bovinae</taxon>
        <taxon>Bos</taxon>
    </lineage>
</organism>
<dbReference type="EC" id="2.7.11.1" evidence="3"/>
<dbReference type="EMBL" id="BT021703">
    <property type="protein sequence ID" value="AAX46550.1"/>
    <property type="molecule type" value="mRNA"/>
</dbReference>
<dbReference type="EMBL" id="BC111299">
    <property type="protein sequence ID" value="AAI11300.1"/>
    <property type="molecule type" value="mRNA"/>
</dbReference>
<dbReference type="RefSeq" id="NP_001030435.1">
    <property type="nucleotide sequence ID" value="NM_001035358.1"/>
</dbReference>
<dbReference type="SMR" id="Q58D94"/>
<dbReference type="FunCoup" id="Q58D94">
    <property type="interactions" value="854"/>
</dbReference>
<dbReference type="STRING" id="9913.ENSBTAP00000026554"/>
<dbReference type="PaxDb" id="9913-ENSBTAP00000026556"/>
<dbReference type="GeneID" id="525647"/>
<dbReference type="KEGG" id="bta:525647"/>
<dbReference type="CTD" id="8569"/>
<dbReference type="eggNOG" id="KOG0607">
    <property type="taxonomic scope" value="Eukaryota"/>
</dbReference>
<dbReference type="InParanoid" id="Q58D94"/>
<dbReference type="OrthoDB" id="5794026at2759"/>
<dbReference type="Proteomes" id="UP000009136">
    <property type="component" value="Unplaced"/>
</dbReference>
<dbReference type="GO" id="GO:0005737">
    <property type="term" value="C:cytoplasm"/>
    <property type="evidence" value="ECO:0000318"/>
    <property type="project" value="GO_Central"/>
</dbReference>
<dbReference type="GO" id="GO:0005634">
    <property type="term" value="C:nucleus"/>
    <property type="evidence" value="ECO:0000318"/>
    <property type="project" value="GO_Central"/>
</dbReference>
<dbReference type="GO" id="GO:0005524">
    <property type="term" value="F:ATP binding"/>
    <property type="evidence" value="ECO:0007669"/>
    <property type="project" value="UniProtKB-KW"/>
</dbReference>
<dbReference type="GO" id="GO:0009931">
    <property type="term" value="F:calcium-dependent protein serine/threonine kinase activity"/>
    <property type="evidence" value="ECO:0000318"/>
    <property type="project" value="GO_Central"/>
</dbReference>
<dbReference type="GO" id="GO:0004683">
    <property type="term" value="F:calcium/calmodulin-dependent protein kinase activity"/>
    <property type="evidence" value="ECO:0000318"/>
    <property type="project" value="GO_Central"/>
</dbReference>
<dbReference type="GO" id="GO:0005516">
    <property type="term" value="F:calmodulin binding"/>
    <property type="evidence" value="ECO:0000318"/>
    <property type="project" value="GO_Central"/>
</dbReference>
<dbReference type="GO" id="GO:0046872">
    <property type="term" value="F:metal ion binding"/>
    <property type="evidence" value="ECO:0007669"/>
    <property type="project" value="UniProtKB-KW"/>
</dbReference>
<dbReference type="GO" id="GO:0106310">
    <property type="term" value="F:protein serine kinase activity"/>
    <property type="evidence" value="ECO:0007669"/>
    <property type="project" value="RHEA"/>
</dbReference>
<dbReference type="GO" id="GO:0035556">
    <property type="term" value="P:intracellular signal transduction"/>
    <property type="evidence" value="ECO:0000318"/>
    <property type="project" value="GO_Central"/>
</dbReference>
<dbReference type="GO" id="GO:0006417">
    <property type="term" value="P:regulation of translation"/>
    <property type="evidence" value="ECO:0007669"/>
    <property type="project" value="UniProtKB-KW"/>
</dbReference>
<dbReference type="CDD" id="cd14174">
    <property type="entry name" value="STKc_Mnk1"/>
    <property type="match status" value="1"/>
</dbReference>
<dbReference type="FunFam" id="1.10.510.10:FF:000119">
    <property type="entry name" value="Putative map kinase-interacting serine/threonine-protein kinase 1"/>
    <property type="match status" value="1"/>
</dbReference>
<dbReference type="FunFam" id="3.30.200.20:FF:000093">
    <property type="entry name" value="Putative map kinase-interacting serine/threonine-protein kinase 1"/>
    <property type="match status" value="1"/>
</dbReference>
<dbReference type="Gene3D" id="3.30.200.20">
    <property type="entry name" value="Phosphorylase Kinase, domain 1"/>
    <property type="match status" value="1"/>
</dbReference>
<dbReference type="Gene3D" id="1.10.510.10">
    <property type="entry name" value="Transferase(Phosphotransferase) domain 1"/>
    <property type="match status" value="1"/>
</dbReference>
<dbReference type="InterPro" id="IPR050205">
    <property type="entry name" value="CDPK_Ser/Thr_kinases"/>
</dbReference>
<dbReference type="InterPro" id="IPR011009">
    <property type="entry name" value="Kinase-like_dom_sf"/>
</dbReference>
<dbReference type="InterPro" id="IPR000719">
    <property type="entry name" value="Prot_kinase_dom"/>
</dbReference>
<dbReference type="InterPro" id="IPR017441">
    <property type="entry name" value="Protein_kinase_ATP_BS"/>
</dbReference>
<dbReference type="InterPro" id="IPR008271">
    <property type="entry name" value="Ser/Thr_kinase_AS"/>
</dbReference>
<dbReference type="PANTHER" id="PTHR24349">
    <property type="entry name" value="SERINE/THREONINE-PROTEIN KINASE"/>
    <property type="match status" value="1"/>
</dbReference>
<dbReference type="Pfam" id="PF00069">
    <property type="entry name" value="Pkinase"/>
    <property type="match status" value="1"/>
</dbReference>
<dbReference type="SMART" id="SM00220">
    <property type="entry name" value="S_TKc"/>
    <property type="match status" value="1"/>
</dbReference>
<dbReference type="SUPFAM" id="SSF56112">
    <property type="entry name" value="Protein kinase-like (PK-like)"/>
    <property type="match status" value="1"/>
</dbReference>
<dbReference type="PROSITE" id="PS00107">
    <property type="entry name" value="PROTEIN_KINASE_ATP"/>
    <property type="match status" value="1"/>
</dbReference>
<dbReference type="PROSITE" id="PS50011">
    <property type="entry name" value="PROTEIN_KINASE_DOM"/>
    <property type="match status" value="1"/>
</dbReference>
<dbReference type="PROSITE" id="PS00108">
    <property type="entry name" value="PROTEIN_KINASE_ST"/>
    <property type="match status" value="1"/>
</dbReference>
<keyword id="KW-0025">Alternative splicing</keyword>
<keyword id="KW-0067">ATP-binding</keyword>
<keyword id="KW-0418">Kinase</keyword>
<keyword id="KW-0460">Magnesium</keyword>
<keyword id="KW-0479">Metal-binding</keyword>
<keyword id="KW-0547">Nucleotide-binding</keyword>
<keyword id="KW-0597">Phosphoprotein</keyword>
<keyword id="KW-1185">Reference proteome</keyword>
<keyword id="KW-0723">Serine/threonine-protein kinase</keyword>
<keyword id="KW-0808">Transferase</keyword>
<keyword id="KW-0810">Translation regulation</keyword>
<gene>
    <name type="primary">MKNK1</name>
</gene>
<evidence type="ECO:0000250" key="1"/>
<evidence type="ECO:0000250" key="2">
    <source>
        <dbReference type="UniProtKB" id="O08605"/>
    </source>
</evidence>
<evidence type="ECO:0000250" key="3">
    <source>
        <dbReference type="UniProtKB" id="Q9BUB5"/>
    </source>
</evidence>
<evidence type="ECO:0000255" key="4">
    <source>
        <dbReference type="PROSITE-ProRule" id="PRU00159"/>
    </source>
</evidence>
<evidence type="ECO:0000255" key="5">
    <source>
        <dbReference type="PROSITE-ProRule" id="PRU10027"/>
    </source>
</evidence>
<evidence type="ECO:0000256" key="6">
    <source>
        <dbReference type="SAM" id="MobiDB-lite"/>
    </source>
</evidence>
<evidence type="ECO:0000303" key="7">
    <source ref="2"/>
</evidence>
<evidence type="ECO:0000305" key="8"/>
<protein>
    <recommendedName>
        <fullName>MAP kinase-interacting serine/threonine-protein kinase 1</fullName>
        <ecNumber evidence="3">2.7.11.1</ecNumber>
    </recommendedName>
    <alternativeName>
        <fullName>MAP kinase signal-integrating kinase 1</fullName>
        <shortName>MAPK signal-integrating kinase 1</shortName>
        <shortName>Mnk1</shortName>
    </alternativeName>
</protein>
<accession>Q58D94</accession>
<accession>Q2T9R8</accession>
<name>MKNK1_BOVIN</name>
<feature type="chain" id="PRO_0000226968" description="MAP kinase-interacting serine/threonine-protein kinase 1">
    <location>
        <begin position="1"/>
        <end position="420"/>
    </location>
</feature>
<feature type="domain" description="Protein kinase" evidence="4">
    <location>
        <begin position="37"/>
        <end position="321"/>
    </location>
</feature>
<feature type="region of interest" description="Disordered" evidence="6">
    <location>
        <begin position="1"/>
        <end position="25"/>
    </location>
</feature>
<feature type="region of interest" description="Disordered" evidence="6">
    <location>
        <begin position="386"/>
        <end position="420"/>
    </location>
</feature>
<feature type="compositionally biased region" description="Low complexity" evidence="6">
    <location>
        <begin position="400"/>
        <end position="409"/>
    </location>
</feature>
<feature type="compositionally biased region" description="Pro residues" evidence="6">
    <location>
        <begin position="410"/>
        <end position="420"/>
    </location>
</feature>
<feature type="active site" description="Proton acceptor" evidence="4 5">
    <location>
        <position position="158"/>
    </location>
</feature>
<feature type="binding site" evidence="4">
    <location>
        <begin position="43"/>
        <end position="51"/>
    </location>
    <ligand>
        <name>ATP</name>
        <dbReference type="ChEBI" id="CHEBI:30616"/>
    </ligand>
</feature>
<feature type="binding site" evidence="4">
    <location>
        <position position="66"/>
    </location>
    <ligand>
        <name>ATP</name>
        <dbReference type="ChEBI" id="CHEBI:30616"/>
    </ligand>
</feature>
<feature type="modified residue" description="Phosphoserine; by PAK2" evidence="2">
    <location>
        <position position="27"/>
    </location>
</feature>
<feature type="modified residue" description="Phosphoserine" evidence="3">
    <location>
        <position position="168"/>
    </location>
</feature>
<feature type="modified residue" description="Phosphoserine" evidence="3">
    <location>
        <position position="173"/>
    </location>
</feature>
<feature type="modified residue" description="Phosphothreonine" evidence="3">
    <location>
        <position position="197"/>
    </location>
</feature>
<feature type="modified residue" description="Phosphothreonine" evidence="3">
    <location>
        <position position="202"/>
    </location>
</feature>
<feature type="modified residue" description="Phosphothreonine" evidence="3">
    <location>
        <position position="332"/>
    </location>
</feature>
<feature type="splice variant" id="VSP_017513" description="In isoform 2." evidence="7">
    <original>Q</original>
    <variation>E</variation>
    <location>
        <position position="324"/>
    </location>
</feature>
<feature type="splice variant" id="VSP_017514" description="In isoform 2." evidence="7">
    <location>
        <begin position="325"/>
        <end position="420"/>
    </location>
</feature>
<feature type="sequence conflict" description="In Ref. 1; AAX46550." evidence="8" ref="1">
    <original>R</original>
    <variation>L</variation>
    <location>
        <position position="149"/>
    </location>
</feature>
<feature type="sequence conflict" description="In Ref. 1; AAX46550." evidence="8" ref="1">
    <original>E</original>
    <variation>D</variation>
    <location>
        <position position="221"/>
    </location>
</feature>
<sequence length="420" mass="46700">MGSSEPIPIAESDKRKKKKRKARATDSLPGKFEDVYKLTSELLGEGANAKVQVAVSLQNGNEYAVKIIEKHAGHSRSRVFREVETLYQCQGNKHILELIEFFEDDTRFYLVFEKLQGGSILAHIQKQKHFNEREASRVVRDVAAALDFRHTKGIAHRDLKPENILCESPEKVSPVKICDFDLGSGVKLNNSCTPITTPELTTPCGSAEYMAPEVVEVFTDEATFYDKRCDLWSLGVVLYIMLSGYPPFVGHCGADCGWDRGEVCTVCQNKLFESIQKGKYEFPDKDWAHISNEAKDLISKLLVRDAKQRLSAAQVLQHPWVQGQAPERGLPTPQVLQRNSSTMDLTLFAAEAIALNRQLSQHEENEQNKLAEESEVLAEGLCSVKLSPPSKSRLARRRALAQAGRSGDAPPSPTPTTPAP</sequence>
<comment type="function">
    <text evidence="1">May play a role in the response to environmental stress and cytokines. Appears to regulate translation by phosphorylating EIF4E, thus increasing the affinity of this protein for the 7-methylguanosine-containing mRNA cap (By similarity).</text>
</comment>
<comment type="catalytic activity">
    <reaction evidence="3">
        <text>L-seryl-[protein] + ATP = O-phospho-L-seryl-[protein] + ADP + H(+)</text>
        <dbReference type="Rhea" id="RHEA:17989"/>
        <dbReference type="Rhea" id="RHEA-COMP:9863"/>
        <dbReference type="Rhea" id="RHEA-COMP:11604"/>
        <dbReference type="ChEBI" id="CHEBI:15378"/>
        <dbReference type="ChEBI" id="CHEBI:29999"/>
        <dbReference type="ChEBI" id="CHEBI:30616"/>
        <dbReference type="ChEBI" id="CHEBI:83421"/>
        <dbReference type="ChEBI" id="CHEBI:456216"/>
        <dbReference type="EC" id="2.7.11.1"/>
    </reaction>
</comment>
<comment type="catalytic activity">
    <reaction evidence="3">
        <text>L-threonyl-[protein] + ATP = O-phospho-L-threonyl-[protein] + ADP + H(+)</text>
        <dbReference type="Rhea" id="RHEA:46608"/>
        <dbReference type="Rhea" id="RHEA-COMP:11060"/>
        <dbReference type="Rhea" id="RHEA-COMP:11605"/>
        <dbReference type="ChEBI" id="CHEBI:15378"/>
        <dbReference type="ChEBI" id="CHEBI:30013"/>
        <dbReference type="ChEBI" id="CHEBI:30616"/>
        <dbReference type="ChEBI" id="CHEBI:61977"/>
        <dbReference type="ChEBI" id="CHEBI:456216"/>
        <dbReference type="EC" id="2.7.11.1"/>
    </reaction>
</comment>
<comment type="cofactor">
    <cofactor evidence="3">
        <name>Mg(2+)</name>
        <dbReference type="ChEBI" id="CHEBI:18420"/>
    </cofactor>
</comment>
<comment type="activity regulation">
    <text evidence="1">Phosphorylated and activated by the p38 kinases and kinases in the Erk pathway.</text>
</comment>
<comment type="subunit">
    <text evidence="1">Interacts with the C-terminal regions of EIF4G1 and EIF4G2. Also binds to dephosphorylated ERK1 and ERK2, and to the p38 kinases (By similarity).</text>
</comment>
<comment type="alternative products">
    <event type="alternative splicing"/>
    <isoform>
        <id>Q58D94-1</id>
        <name>1</name>
        <sequence type="displayed"/>
    </isoform>
    <isoform>
        <id>Q58D94-2</id>
        <name>2</name>
        <sequence type="described" ref="VSP_017513 VSP_017514"/>
    </isoform>
</comment>
<comment type="PTM">
    <text evidence="1">Dual phosphorylation of Thr-197 and Thr-202 activates the kinase. Phosphorylation of Thr-332 activates the kinase. MAPK3/ERK1 is one of the kinases which activate MKNK1/MNK1. Phosphorylation by PAK2 leads to a reduced phosphorylation of EIF4G1 (By similarity).</text>
</comment>
<comment type="similarity">
    <text evidence="8">Belongs to the protein kinase superfamily. CAMK Ser/Thr protein kinase family.</text>
</comment>